<gene>
    <name evidence="1" type="primary">pgi</name>
</gene>
<feature type="chain" id="PRO_0000180771" description="Glucose-6-phosphate isomerase">
    <location>
        <begin position="1"/>
        <end position="504"/>
    </location>
</feature>
<feature type="active site" description="Proton donor" evidence="1">
    <location>
        <position position="333"/>
    </location>
</feature>
<feature type="active site" evidence="1">
    <location>
        <position position="364"/>
    </location>
</feature>
<feature type="active site" evidence="1">
    <location>
        <position position="473"/>
    </location>
</feature>
<reference key="1">
    <citation type="journal article" date="1999" name="Appl. Environ. Microbiol.">
        <title>Requirement for phosphoglucose isomerase of Xanthomonas campestris in pathogenesis of citrus canker.</title>
        <authorList>
            <person name="Tung S.Y."/>
            <person name="Kuo T.T."/>
        </authorList>
    </citation>
    <scope>NUCLEOTIDE SEQUENCE [GENOMIC DNA]</scope>
    <scope>CHARACTERIZATION</scope>
    <source>
        <strain>XW47</strain>
    </source>
</reference>
<name>G6PI_XANCI</name>
<comment type="function">
    <text evidence="1">Catalyzes the reversible isomerization of glucose-6-phosphate to fructose-6-phosphate.</text>
</comment>
<comment type="function">
    <text>Required for pathogenicity.</text>
</comment>
<comment type="catalytic activity">
    <reaction evidence="1">
        <text>alpha-D-glucose 6-phosphate = beta-D-fructose 6-phosphate</text>
        <dbReference type="Rhea" id="RHEA:11816"/>
        <dbReference type="ChEBI" id="CHEBI:57634"/>
        <dbReference type="ChEBI" id="CHEBI:58225"/>
        <dbReference type="EC" id="5.3.1.9"/>
    </reaction>
</comment>
<comment type="pathway">
    <text evidence="1">Carbohydrate biosynthesis; gluconeogenesis.</text>
</comment>
<comment type="pathway">
    <text evidence="1">Carbohydrate degradation; glycolysis; D-glyceraldehyde 3-phosphate and glycerone phosphate from D-glucose: step 2/4.</text>
</comment>
<comment type="subcellular location">
    <subcellularLocation>
        <location evidence="1">Cytoplasm</location>
    </subcellularLocation>
</comment>
<comment type="induction">
    <text>Inhibited by growth in complex medium but induced by culture in plant extract.</text>
</comment>
<comment type="miscellaneous">
    <text>Mutation in pgi results in the inability of X.c.citri to utilize fructose or glycerol as carbon sources, to grow in plant tissue, and to cause typical canker symptoms.</text>
</comment>
<comment type="similarity">
    <text evidence="1 2">Belongs to the GPI family.</text>
</comment>
<comment type="sequence caution" evidence="2">
    <conflict type="erroneous initiation">
        <sequence resource="EMBL-CDS" id="AAC08426"/>
    </conflict>
</comment>
<protein>
    <recommendedName>
        <fullName evidence="1">Glucose-6-phosphate isomerase</fullName>
        <shortName evidence="1">GPI</shortName>
        <ecNumber evidence="1">5.3.1.9</ecNumber>
    </recommendedName>
    <alternativeName>
        <fullName evidence="1">Phosphoglucose isomerase</fullName>
        <shortName evidence="1">PGI</shortName>
    </alternativeName>
    <alternativeName>
        <fullName evidence="1">Phosphohexose isomerase</fullName>
        <shortName evidence="1">PHI</shortName>
    </alternativeName>
</protein>
<keyword id="KW-0963">Cytoplasm</keyword>
<keyword id="KW-0312">Gluconeogenesis</keyword>
<keyword id="KW-0324">Glycolysis</keyword>
<keyword id="KW-0413">Isomerase</keyword>
<proteinExistence type="evidence at protein level"/>
<accession>P0A0T1</accession>
<accession>O68824</accession>
<dbReference type="EC" id="5.3.1.9" evidence="1"/>
<dbReference type="EMBL" id="AF054807">
    <property type="protein sequence ID" value="AAC08426.1"/>
    <property type="status" value="ALT_INIT"/>
    <property type="molecule type" value="Genomic_DNA"/>
</dbReference>
<dbReference type="PIR" id="T46970">
    <property type="entry name" value="T46970"/>
</dbReference>
<dbReference type="RefSeq" id="WP_011051139.1">
    <property type="nucleotide sequence ID" value="NZ_CP059992.1"/>
</dbReference>
<dbReference type="SMR" id="P0A0T1"/>
<dbReference type="GeneID" id="66910936"/>
<dbReference type="OMA" id="DWYRQLW"/>
<dbReference type="UniPathway" id="UPA00109">
    <property type="reaction ID" value="UER00181"/>
</dbReference>
<dbReference type="UniPathway" id="UPA00138"/>
<dbReference type="GO" id="GO:0005829">
    <property type="term" value="C:cytosol"/>
    <property type="evidence" value="ECO:0007669"/>
    <property type="project" value="TreeGrafter"/>
</dbReference>
<dbReference type="GO" id="GO:0097367">
    <property type="term" value="F:carbohydrate derivative binding"/>
    <property type="evidence" value="ECO:0007669"/>
    <property type="project" value="InterPro"/>
</dbReference>
<dbReference type="GO" id="GO:0004347">
    <property type="term" value="F:glucose-6-phosphate isomerase activity"/>
    <property type="evidence" value="ECO:0007669"/>
    <property type="project" value="UniProtKB-UniRule"/>
</dbReference>
<dbReference type="GO" id="GO:0048029">
    <property type="term" value="F:monosaccharide binding"/>
    <property type="evidence" value="ECO:0007669"/>
    <property type="project" value="TreeGrafter"/>
</dbReference>
<dbReference type="GO" id="GO:0006094">
    <property type="term" value="P:gluconeogenesis"/>
    <property type="evidence" value="ECO:0007669"/>
    <property type="project" value="UniProtKB-UniRule"/>
</dbReference>
<dbReference type="GO" id="GO:0051156">
    <property type="term" value="P:glucose 6-phosphate metabolic process"/>
    <property type="evidence" value="ECO:0007669"/>
    <property type="project" value="TreeGrafter"/>
</dbReference>
<dbReference type="GO" id="GO:0006096">
    <property type="term" value="P:glycolytic process"/>
    <property type="evidence" value="ECO:0007669"/>
    <property type="project" value="UniProtKB-UniRule"/>
</dbReference>
<dbReference type="CDD" id="cd05015">
    <property type="entry name" value="SIS_PGI_1"/>
    <property type="match status" value="1"/>
</dbReference>
<dbReference type="CDD" id="cd05016">
    <property type="entry name" value="SIS_PGI_2"/>
    <property type="match status" value="1"/>
</dbReference>
<dbReference type="Gene3D" id="1.10.1390.10">
    <property type="match status" value="1"/>
</dbReference>
<dbReference type="Gene3D" id="3.40.50.10490">
    <property type="entry name" value="Glucose-6-phosphate isomerase like protein, domain 1"/>
    <property type="match status" value="2"/>
</dbReference>
<dbReference type="HAMAP" id="MF_00473">
    <property type="entry name" value="G6P_isomerase"/>
    <property type="match status" value="1"/>
</dbReference>
<dbReference type="InterPro" id="IPR001672">
    <property type="entry name" value="G6P_Isomerase"/>
</dbReference>
<dbReference type="InterPro" id="IPR023096">
    <property type="entry name" value="G6P_Isomerase_C"/>
</dbReference>
<dbReference type="InterPro" id="IPR018189">
    <property type="entry name" value="Phosphoglucose_isomerase_CS"/>
</dbReference>
<dbReference type="InterPro" id="IPR046348">
    <property type="entry name" value="SIS_dom_sf"/>
</dbReference>
<dbReference type="InterPro" id="IPR035476">
    <property type="entry name" value="SIS_PGI_1"/>
</dbReference>
<dbReference type="InterPro" id="IPR035482">
    <property type="entry name" value="SIS_PGI_2"/>
</dbReference>
<dbReference type="NCBIfam" id="NF001211">
    <property type="entry name" value="PRK00179.1"/>
    <property type="match status" value="1"/>
</dbReference>
<dbReference type="PANTHER" id="PTHR11469">
    <property type="entry name" value="GLUCOSE-6-PHOSPHATE ISOMERASE"/>
    <property type="match status" value="1"/>
</dbReference>
<dbReference type="PANTHER" id="PTHR11469:SF1">
    <property type="entry name" value="GLUCOSE-6-PHOSPHATE ISOMERASE"/>
    <property type="match status" value="1"/>
</dbReference>
<dbReference type="Pfam" id="PF00342">
    <property type="entry name" value="PGI"/>
    <property type="match status" value="1"/>
</dbReference>
<dbReference type="PRINTS" id="PR00662">
    <property type="entry name" value="G6PISOMERASE"/>
</dbReference>
<dbReference type="SUPFAM" id="SSF53697">
    <property type="entry name" value="SIS domain"/>
    <property type="match status" value="1"/>
</dbReference>
<dbReference type="PROSITE" id="PS00765">
    <property type="entry name" value="P_GLUCOSE_ISOMERASE_1"/>
    <property type="match status" value="1"/>
</dbReference>
<dbReference type="PROSITE" id="PS00174">
    <property type="entry name" value="P_GLUCOSE_ISOMERASE_2"/>
    <property type="match status" value="1"/>
</dbReference>
<dbReference type="PROSITE" id="PS51463">
    <property type="entry name" value="P_GLUCOSE_ISOMERASE_3"/>
    <property type="match status" value="1"/>
</dbReference>
<sequence length="504" mass="54454">MTQTNGFDALHAHAQRLRGAAIPALLAAEPERPTQYARQVGPLYFNFARQKYDRAALDALFAIARERDLSGAFQRLFRGEQVNVTEQRAALHTALRGDLTDAPVASEAYATAEEVRQRMGSLIQQLEATDVTDIVSVGIGGSDLGPRLVADALRAPSGARFRVHFVSNVDGAAMQRTLATLDPARTAGILISKTFGTQETLLNGSILHAWLGGSERLYAVSANPERAAKAFDIAPGRVLPMWDWVGGRYSLWSAVGFPIALAIGFERFEQLLEGAAQFDAHVLNTPLEENVAVLHGLTAVWNRNLLGSATHAVMTYDQRLALLPAYLQQLVMESLGKRVKLDGSAVDSDTVSVWWGGAGTDVQHSFFQALHQGTSVVPADFIGTVHNDDPYAENHTALMANVLAQTEALANGQDSSDPHRSYPGGRPSTVILLDALTPQALGALISMYEHSVYVQSVMWGINAFDQFGVELGKQLASQLLPALKGESVDVADPVTRELLNKLRG</sequence>
<evidence type="ECO:0000255" key="1">
    <source>
        <dbReference type="HAMAP-Rule" id="MF_00473"/>
    </source>
</evidence>
<evidence type="ECO:0000305" key="2"/>
<organism>
    <name type="scientific">Xanthomonas citri</name>
    <name type="common">Xanthomonas campestris pv. citri</name>
    <dbReference type="NCBI Taxonomy" id="346"/>
    <lineage>
        <taxon>Bacteria</taxon>
        <taxon>Pseudomonadati</taxon>
        <taxon>Pseudomonadota</taxon>
        <taxon>Gammaproteobacteria</taxon>
        <taxon>Lysobacterales</taxon>
        <taxon>Lysobacteraceae</taxon>
        <taxon>Xanthomonas</taxon>
    </lineage>
</organism>